<feature type="chain" id="PRO_0000279393" description="Tektin-like protein 1">
    <location>
        <begin position="1"/>
        <end position="500"/>
    </location>
</feature>
<feature type="region of interest" description="Disordered" evidence="4">
    <location>
        <begin position="1"/>
        <end position="25"/>
    </location>
</feature>
<feature type="region of interest" description="Disordered" evidence="4">
    <location>
        <begin position="265"/>
        <end position="286"/>
    </location>
</feature>
<feature type="coiled-coil region" evidence="3">
    <location>
        <begin position="198"/>
        <end position="229"/>
    </location>
</feature>
<feature type="coiled-coil region" evidence="3">
    <location>
        <begin position="422"/>
        <end position="448"/>
    </location>
</feature>
<feature type="modified residue" description="Phosphoserine" evidence="5">
    <location>
        <position position="14"/>
    </location>
</feature>
<feature type="modified residue" description="Phosphotyrosine" evidence="2">
    <location>
        <position position="372"/>
    </location>
</feature>
<name>TEKL1_RAT</name>
<gene>
    <name evidence="1" type="primary">Tektl1</name>
    <name type="synonym">Ccdc105</name>
</gene>
<proteinExistence type="evidence at protein level"/>
<comment type="function">
    <text evidence="2">Microtubule inner protein (MIP) part of the dynein-decorated doublet microtubules (DMTs) in sperm flagellar axoneme, which is required for motile flagellum beating (By similarity). Forms an extensive interaction network cross-linking the lumen of axonemal doublet microtubules (By similarity).</text>
</comment>
<comment type="subunit">
    <text evidence="2">Microtubule inner protein component of sperm flagellar doublet microtubules.</text>
</comment>
<comment type="subcellular location">
    <subcellularLocation>
        <location evidence="2">Cytoplasm</location>
        <location evidence="2">Cytoskeleton</location>
        <location evidence="2">Flagellum axoneme</location>
    </subcellularLocation>
</comment>
<organism>
    <name type="scientific">Rattus norvegicus</name>
    <name type="common">Rat</name>
    <dbReference type="NCBI Taxonomy" id="10116"/>
    <lineage>
        <taxon>Eukaryota</taxon>
        <taxon>Metazoa</taxon>
        <taxon>Chordata</taxon>
        <taxon>Craniata</taxon>
        <taxon>Vertebrata</taxon>
        <taxon>Euteleostomi</taxon>
        <taxon>Mammalia</taxon>
        <taxon>Eutheria</taxon>
        <taxon>Euarchontoglires</taxon>
        <taxon>Glires</taxon>
        <taxon>Rodentia</taxon>
        <taxon>Myomorpha</taxon>
        <taxon>Muroidea</taxon>
        <taxon>Muridae</taxon>
        <taxon>Murinae</taxon>
        <taxon>Rattus</taxon>
    </lineage>
</organism>
<reference key="1">
    <citation type="journal article" date="2004" name="Genome Res.">
        <title>The status, quality, and expansion of the NIH full-length cDNA project: the Mammalian Gene Collection (MGC).</title>
        <authorList>
            <consortium name="The MGC Project Team"/>
        </authorList>
    </citation>
    <scope>NUCLEOTIDE SEQUENCE [LARGE SCALE MRNA]</scope>
    <source>
        <tissue>Testis</tissue>
    </source>
</reference>
<reference key="2">
    <citation type="journal article" date="2012" name="Nat. Commun.">
        <title>Quantitative maps of protein phosphorylation sites across 14 different rat organs and tissues.</title>
        <authorList>
            <person name="Lundby A."/>
            <person name="Secher A."/>
            <person name="Lage K."/>
            <person name="Nordsborg N.B."/>
            <person name="Dmytriyev A."/>
            <person name="Lundby C."/>
            <person name="Olsen J.V."/>
        </authorList>
    </citation>
    <scope>PHOSPHORYLATION [LARGE SCALE ANALYSIS] AT SER-14</scope>
    <scope>IDENTIFICATION BY MASS SPECTROMETRY [LARGE SCALE ANALYSIS]</scope>
</reference>
<keyword id="KW-0966">Cell projection</keyword>
<keyword id="KW-0969">Cilium</keyword>
<keyword id="KW-0175">Coiled coil</keyword>
<keyword id="KW-0963">Cytoplasm</keyword>
<keyword id="KW-0206">Cytoskeleton</keyword>
<keyword id="KW-0282">Flagellum</keyword>
<keyword id="KW-0597">Phosphoprotein</keyword>
<keyword id="KW-1185">Reference proteome</keyword>
<protein>
    <recommendedName>
        <fullName evidence="1">Tektin-like protein 1</fullName>
    </recommendedName>
    <alternativeName>
        <fullName>Coiled-coil domain-containing protein 105</fullName>
    </alternativeName>
</protein>
<sequence length="500" mass="57466">MPVLLPSTDRDQDSRVGAPEWHQAAKATSRKAHLLTDRCGKEAVTMWQPKDSVLDPNVAHHLGRAAYMEPWRFRVEMLKGGGTVEKPPPGEGVTLWKGKMKPPAWYARLPLPMHRDARAQQTAEVVHAHARGARLTAARLGRAQHQINGQLRLLLRQREATDRRLSEVRKGLLINEQSVKLRGYRPKCEKIPDKADSMLVWEREELKSMKRKMEKDMERSEALLKALASCRDTLDFYCQERLQAVGLMNQPLDKVLEQAGRHSWVDITRPPTPRTQGLKTPPPDPVGAYTPACAKALFEAKRLLMESKDILAELAKNEVDIQNQQQEISDRVCNSLAQKMRETLELKERMTMTLGLMRGTIHRCMKFNQEMYVTRGLIKGPLLKRDLEAREKLNRPLVRMYQRHVGTQLPEATRLAQGTDLLTRHNLQMEKNLKELRTTHDNLAWSLNCKKIGHDVDYDVVRLRLRQLHPHVCYEQAKRLINDWDPRTPPPCSRTNTSSK</sequence>
<accession>Q4V7B5</accession>
<dbReference type="EMBL" id="BC098035">
    <property type="protein sequence ID" value="AAH98035.1"/>
    <property type="molecule type" value="mRNA"/>
</dbReference>
<dbReference type="RefSeq" id="NP_001020945.1">
    <property type="nucleotide sequence ID" value="NM_001025774.1"/>
</dbReference>
<dbReference type="SMR" id="Q4V7B5"/>
<dbReference type="FunCoup" id="Q4V7B5">
    <property type="interactions" value="14"/>
</dbReference>
<dbReference type="STRING" id="10116.ENSRNOP00000009833"/>
<dbReference type="iPTMnet" id="Q4V7B5"/>
<dbReference type="PhosphoSitePlus" id="Q4V7B5"/>
<dbReference type="PaxDb" id="10116-ENSRNOP00000009833"/>
<dbReference type="Ensembl" id="ENSRNOT00000009833.6">
    <property type="protein sequence ID" value="ENSRNOP00000009833.4"/>
    <property type="gene ID" value="ENSRNOG00000007375.6"/>
</dbReference>
<dbReference type="GeneID" id="500800"/>
<dbReference type="KEGG" id="rno:500800"/>
<dbReference type="UCSC" id="RGD:1594374">
    <property type="organism name" value="rat"/>
</dbReference>
<dbReference type="AGR" id="RGD:1594374"/>
<dbReference type="CTD" id="126402"/>
<dbReference type="RGD" id="1594374">
    <property type="gene designation" value="Tektl1"/>
</dbReference>
<dbReference type="eggNOG" id="ENOG502RUEW">
    <property type="taxonomic scope" value="Eukaryota"/>
</dbReference>
<dbReference type="GeneTree" id="ENSGT00390000003207"/>
<dbReference type="HOGENOM" id="CLU_052125_0_0_1"/>
<dbReference type="InParanoid" id="Q4V7B5"/>
<dbReference type="OMA" id="YTPECAT"/>
<dbReference type="OrthoDB" id="9896158at2759"/>
<dbReference type="PhylomeDB" id="Q4V7B5"/>
<dbReference type="TreeFam" id="TF329813"/>
<dbReference type="PRO" id="PR:Q4V7B5"/>
<dbReference type="Proteomes" id="UP000002494">
    <property type="component" value="Chromosome 7"/>
</dbReference>
<dbReference type="Bgee" id="ENSRNOG00000007375">
    <property type="expression patterns" value="Expressed in testis and 1 other cell type or tissue"/>
</dbReference>
<dbReference type="GO" id="GO:0160112">
    <property type="term" value="C:axonemal B tubule inner sheath"/>
    <property type="evidence" value="ECO:0000250"/>
    <property type="project" value="UniProtKB"/>
</dbReference>
<dbReference type="GO" id="GO:0036126">
    <property type="term" value="C:sperm flagellum"/>
    <property type="evidence" value="ECO:0000250"/>
    <property type="project" value="UniProtKB"/>
</dbReference>
<dbReference type="GO" id="GO:0030317">
    <property type="term" value="P:flagellated sperm motility"/>
    <property type="evidence" value="ECO:0000250"/>
    <property type="project" value="UniProtKB"/>
</dbReference>
<dbReference type="InterPro" id="IPR048256">
    <property type="entry name" value="Tektin-like"/>
</dbReference>
<dbReference type="InterPro" id="IPR038949">
    <property type="entry name" value="TEKTL1"/>
</dbReference>
<dbReference type="PANTHER" id="PTHR35081">
    <property type="entry name" value="COILED-COIL DOMAIN-CONTAINING PROTEIN 105"/>
    <property type="match status" value="1"/>
</dbReference>
<dbReference type="PANTHER" id="PTHR35081:SF1">
    <property type="entry name" value="COILED-COIL DOMAIN-CONTAINING PROTEIN 105"/>
    <property type="match status" value="1"/>
</dbReference>
<dbReference type="Pfam" id="PF03148">
    <property type="entry name" value="Tektin"/>
    <property type="match status" value="1"/>
</dbReference>
<evidence type="ECO:0000250" key="1">
    <source>
        <dbReference type="UniProtKB" id="Q8IYK2"/>
    </source>
</evidence>
<evidence type="ECO:0000250" key="2">
    <source>
        <dbReference type="UniProtKB" id="Q9D4K7"/>
    </source>
</evidence>
<evidence type="ECO:0000255" key="3"/>
<evidence type="ECO:0000256" key="4">
    <source>
        <dbReference type="SAM" id="MobiDB-lite"/>
    </source>
</evidence>
<evidence type="ECO:0007744" key="5">
    <source>
    </source>
</evidence>